<name>PURL_BARQU</name>
<accession>Q6FZI9</accession>
<gene>
    <name evidence="1" type="primary">purL</name>
    <name type="ordered locus">BQ07500</name>
</gene>
<protein>
    <recommendedName>
        <fullName evidence="1">Phosphoribosylformylglycinamidine synthase subunit PurL</fullName>
        <shortName evidence="1">FGAM synthase</shortName>
        <ecNumber evidence="1">6.3.5.3</ecNumber>
    </recommendedName>
    <alternativeName>
        <fullName evidence="1">Formylglycinamide ribonucleotide amidotransferase subunit II</fullName>
        <shortName evidence="1">FGAR amidotransferase II</shortName>
        <shortName evidence="1">FGAR-AT II</shortName>
    </alternativeName>
    <alternativeName>
        <fullName evidence="1">Glutamine amidotransferase PurL</fullName>
    </alternativeName>
    <alternativeName>
        <fullName evidence="1">Phosphoribosylformylglycinamidine synthase subunit II</fullName>
    </alternativeName>
</protein>
<reference key="1">
    <citation type="journal article" date="2004" name="Proc. Natl. Acad. Sci. U.S.A.">
        <title>The louse-borne human pathogen Bartonella quintana is a genomic derivative of the zoonotic agent Bartonella henselae.</title>
        <authorList>
            <person name="Alsmark U.C.M."/>
            <person name="Frank A.C."/>
            <person name="Karlberg E.O."/>
            <person name="Legault B.-A."/>
            <person name="Ardell D.H."/>
            <person name="Canbaeck B."/>
            <person name="Eriksson A.-S."/>
            <person name="Naeslund A.K."/>
            <person name="Handley S.A."/>
            <person name="Huvet M."/>
            <person name="La Scola B."/>
            <person name="Holmberg M."/>
            <person name="Andersson S.G.E."/>
        </authorList>
    </citation>
    <scope>NUCLEOTIDE SEQUENCE [LARGE SCALE GENOMIC DNA]</scope>
    <source>
        <strain>Toulouse</strain>
    </source>
</reference>
<evidence type="ECO:0000255" key="1">
    <source>
        <dbReference type="HAMAP-Rule" id="MF_00420"/>
    </source>
</evidence>
<comment type="function">
    <text evidence="1">Part of the phosphoribosylformylglycinamidine synthase complex involved in the purines biosynthetic pathway. Catalyzes the ATP-dependent conversion of formylglycinamide ribonucleotide (FGAR) and glutamine to yield formylglycinamidine ribonucleotide (FGAM) and glutamate. The FGAM synthase complex is composed of three subunits. PurQ produces an ammonia molecule by converting glutamine to glutamate. PurL transfers the ammonia molecule to FGAR to form FGAM in an ATP-dependent manner. PurS interacts with PurQ and PurL and is thought to assist in the transfer of the ammonia molecule from PurQ to PurL.</text>
</comment>
<comment type="catalytic activity">
    <reaction evidence="1">
        <text>N(2)-formyl-N(1)-(5-phospho-beta-D-ribosyl)glycinamide + L-glutamine + ATP + H2O = 2-formamido-N(1)-(5-O-phospho-beta-D-ribosyl)acetamidine + L-glutamate + ADP + phosphate + H(+)</text>
        <dbReference type="Rhea" id="RHEA:17129"/>
        <dbReference type="ChEBI" id="CHEBI:15377"/>
        <dbReference type="ChEBI" id="CHEBI:15378"/>
        <dbReference type="ChEBI" id="CHEBI:29985"/>
        <dbReference type="ChEBI" id="CHEBI:30616"/>
        <dbReference type="ChEBI" id="CHEBI:43474"/>
        <dbReference type="ChEBI" id="CHEBI:58359"/>
        <dbReference type="ChEBI" id="CHEBI:147286"/>
        <dbReference type="ChEBI" id="CHEBI:147287"/>
        <dbReference type="ChEBI" id="CHEBI:456216"/>
        <dbReference type="EC" id="6.3.5.3"/>
    </reaction>
</comment>
<comment type="pathway">
    <text evidence="1">Purine metabolism; IMP biosynthesis via de novo pathway; 5-amino-1-(5-phospho-D-ribosyl)imidazole from N(2)-formyl-N(1)-(5-phospho-D-ribosyl)glycinamide: step 1/2.</text>
</comment>
<comment type="subunit">
    <text evidence="1">Monomer. Part of the FGAM synthase complex composed of 1 PurL, 1 PurQ and 2 PurS subunits.</text>
</comment>
<comment type="subcellular location">
    <subcellularLocation>
        <location evidence="1">Cytoplasm</location>
    </subcellularLocation>
</comment>
<comment type="similarity">
    <text evidence="1">Belongs to the FGAMS family.</text>
</comment>
<proteinExistence type="inferred from homology"/>
<sequence>MNSCNNIAITPELIAQHGLKSDEYQHILTLIGREPTFTELGIFSAMWNEHCSYKSSKKWLKTLPIKGKCVIQGPGENAGVIDIGKGQCVVFKMESHNHPSYIEPYQGAATGMGGILRDVFTMGARPVAAMNALRFGSPNHPRTRHLVAGVVSGIGGYSNAFGVPTVGGEVNFDERYNGNILVNAFVAGIAKTDSIFYSKAQGVGLPVVYLGAKTGRDGVGGAMMASAEFNDSIDEKRPTVQVGDPFIEKCLLEACLELMELKAIVAIQDMGAAGLTSSAVEMGAKGNLGIQLNLDKVPTREENMTAYEIMLSESQERMLMVLKPELKKRAAAIFQKWGLHFSIIGKTTDDLRFRVTHQGEEVVNLPIKELGDEAPVYDRPWIEPTLKPTLKAEEVKKIENFADVLLKLLNSANQSSRRWVYEQYDTLIQGNTLVRPGGDAGVIRVSNNDKRALAFSCDVTPRYCEADPYEGGKQAVVECWRNISTTGATPLAATDNLNFGNPENPKIMGQLVFAIKGISEACRVLDFPIVSGNVSLYNETNGEAILPTPTIAGVGLLDNWSKTVTIGGMQNKDSIVLIGPCGSHLGQSIYARNILNIDAGAPPHIDLQLEKKHGQFVRDVIHRGFVNAAHDISDGGLALALAEMVIKASKGIRIKLSNKSPQHAELFGEDQARYILAVKPHALNSLKELAQVNEISLTELGTVEGNSLNIDSILNLSIDKLTQNYESWFPQFMNEE</sequence>
<dbReference type="EC" id="6.3.5.3" evidence="1"/>
<dbReference type="EMBL" id="BX897700">
    <property type="protein sequence ID" value="CAF26234.1"/>
    <property type="molecule type" value="Genomic_DNA"/>
</dbReference>
<dbReference type="RefSeq" id="WP_011179486.1">
    <property type="nucleotide sequence ID" value="NC_005955.1"/>
</dbReference>
<dbReference type="SMR" id="Q6FZI9"/>
<dbReference type="KEGG" id="bqu:BQ07500"/>
<dbReference type="eggNOG" id="COG0046">
    <property type="taxonomic scope" value="Bacteria"/>
</dbReference>
<dbReference type="HOGENOM" id="CLU_003100_0_1_5"/>
<dbReference type="OrthoDB" id="9804441at2"/>
<dbReference type="UniPathway" id="UPA00074">
    <property type="reaction ID" value="UER00128"/>
</dbReference>
<dbReference type="Proteomes" id="UP000000597">
    <property type="component" value="Chromosome"/>
</dbReference>
<dbReference type="GO" id="GO:0005737">
    <property type="term" value="C:cytoplasm"/>
    <property type="evidence" value="ECO:0007669"/>
    <property type="project" value="UniProtKB-SubCell"/>
</dbReference>
<dbReference type="GO" id="GO:0005524">
    <property type="term" value="F:ATP binding"/>
    <property type="evidence" value="ECO:0007669"/>
    <property type="project" value="UniProtKB-UniRule"/>
</dbReference>
<dbReference type="GO" id="GO:0000287">
    <property type="term" value="F:magnesium ion binding"/>
    <property type="evidence" value="ECO:0007669"/>
    <property type="project" value="UniProtKB-UniRule"/>
</dbReference>
<dbReference type="GO" id="GO:0004642">
    <property type="term" value="F:phosphoribosylformylglycinamidine synthase activity"/>
    <property type="evidence" value="ECO:0007669"/>
    <property type="project" value="UniProtKB-UniRule"/>
</dbReference>
<dbReference type="GO" id="GO:0006189">
    <property type="term" value="P:'de novo' IMP biosynthetic process"/>
    <property type="evidence" value="ECO:0007669"/>
    <property type="project" value="UniProtKB-UniRule"/>
</dbReference>
<dbReference type="CDD" id="cd02203">
    <property type="entry name" value="PurL_repeat1"/>
    <property type="match status" value="1"/>
</dbReference>
<dbReference type="CDD" id="cd02204">
    <property type="entry name" value="PurL_repeat2"/>
    <property type="match status" value="1"/>
</dbReference>
<dbReference type="FunFam" id="3.30.1330.10:FF:000004">
    <property type="entry name" value="Phosphoribosylformylglycinamidine synthase subunit PurL"/>
    <property type="match status" value="1"/>
</dbReference>
<dbReference type="Gene3D" id="3.90.650.10">
    <property type="entry name" value="PurM-like C-terminal domain"/>
    <property type="match status" value="2"/>
</dbReference>
<dbReference type="Gene3D" id="3.30.1330.10">
    <property type="entry name" value="PurM-like, N-terminal domain"/>
    <property type="match status" value="2"/>
</dbReference>
<dbReference type="HAMAP" id="MF_00420">
    <property type="entry name" value="PurL_2"/>
    <property type="match status" value="1"/>
</dbReference>
<dbReference type="InterPro" id="IPR010074">
    <property type="entry name" value="PRibForGlyAmidine_synth_PurL"/>
</dbReference>
<dbReference type="InterPro" id="IPR041609">
    <property type="entry name" value="PurL_linker"/>
</dbReference>
<dbReference type="InterPro" id="IPR010918">
    <property type="entry name" value="PurM-like_C_dom"/>
</dbReference>
<dbReference type="InterPro" id="IPR036676">
    <property type="entry name" value="PurM-like_C_sf"/>
</dbReference>
<dbReference type="InterPro" id="IPR016188">
    <property type="entry name" value="PurM-like_N"/>
</dbReference>
<dbReference type="InterPro" id="IPR036921">
    <property type="entry name" value="PurM-like_N_sf"/>
</dbReference>
<dbReference type="NCBIfam" id="TIGR01736">
    <property type="entry name" value="FGAM_synth_II"/>
    <property type="match status" value="1"/>
</dbReference>
<dbReference type="NCBIfam" id="NF002290">
    <property type="entry name" value="PRK01213.1"/>
    <property type="match status" value="1"/>
</dbReference>
<dbReference type="PANTHER" id="PTHR43555">
    <property type="entry name" value="PHOSPHORIBOSYLFORMYLGLYCINAMIDINE SYNTHASE SUBUNIT PURL"/>
    <property type="match status" value="1"/>
</dbReference>
<dbReference type="PANTHER" id="PTHR43555:SF1">
    <property type="entry name" value="PHOSPHORIBOSYLFORMYLGLYCINAMIDINE SYNTHASE SUBUNIT PURL"/>
    <property type="match status" value="1"/>
</dbReference>
<dbReference type="Pfam" id="PF00586">
    <property type="entry name" value="AIRS"/>
    <property type="match status" value="2"/>
</dbReference>
<dbReference type="Pfam" id="PF02769">
    <property type="entry name" value="AIRS_C"/>
    <property type="match status" value="2"/>
</dbReference>
<dbReference type="Pfam" id="PF18072">
    <property type="entry name" value="FGAR-AT_linker"/>
    <property type="match status" value="1"/>
</dbReference>
<dbReference type="PIRSF" id="PIRSF001587">
    <property type="entry name" value="FGAM_synthase_II"/>
    <property type="match status" value="1"/>
</dbReference>
<dbReference type="SUPFAM" id="SSF56042">
    <property type="entry name" value="PurM C-terminal domain-like"/>
    <property type="match status" value="2"/>
</dbReference>
<dbReference type="SUPFAM" id="SSF55326">
    <property type="entry name" value="PurM N-terminal domain-like"/>
    <property type="match status" value="2"/>
</dbReference>
<feature type="chain" id="PRO_0000100442" description="Phosphoribosylformylglycinamidine synthase subunit PurL">
    <location>
        <begin position="1"/>
        <end position="736"/>
    </location>
</feature>
<feature type="active site" evidence="1">
    <location>
        <position position="50"/>
    </location>
</feature>
<feature type="active site" description="Proton acceptor" evidence="1">
    <location>
        <position position="96"/>
    </location>
</feature>
<feature type="binding site" evidence="1">
    <location>
        <position position="53"/>
    </location>
    <ligand>
        <name>ATP</name>
        <dbReference type="ChEBI" id="CHEBI:30616"/>
    </ligand>
</feature>
<feature type="binding site" evidence="1">
    <location>
        <position position="92"/>
    </location>
    <ligand>
        <name>ATP</name>
        <dbReference type="ChEBI" id="CHEBI:30616"/>
    </ligand>
</feature>
<feature type="binding site" evidence="1">
    <location>
        <position position="94"/>
    </location>
    <ligand>
        <name>Mg(2+)</name>
        <dbReference type="ChEBI" id="CHEBI:18420"/>
        <label>1</label>
    </ligand>
</feature>
<feature type="binding site" evidence="1">
    <location>
        <begin position="95"/>
        <end position="98"/>
    </location>
    <ligand>
        <name>substrate</name>
    </ligand>
</feature>
<feature type="binding site" evidence="1">
    <location>
        <position position="117"/>
    </location>
    <ligand>
        <name>substrate</name>
    </ligand>
</feature>
<feature type="binding site" evidence="1">
    <location>
        <position position="118"/>
    </location>
    <ligand>
        <name>Mg(2+)</name>
        <dbReference type="ChEBI" id="CHEBI:18420"/>
        <label>2</label>
    </ligand>
</feature>
<feature type="binding site" evidence="1">
    <location>
        <position position="241"/>
    </location>
    <ligand>
        <name>substrate</name>
    </ligand>
</feature>
<feature type="binding site" evidence="1">
    <location>
        <position position="269"/>
    </location>
    <ligand>
        <name>Mg(2+)</name>
        <dbReference type="ChEBI" id="CHEBI:18420"/>
        <label>2</label>
    </ligand>
</feature>
<feature type="binding site" evidence="1">
    <location>
        <begin position="313"/>
        <end position="315"/>
    </location>
    <ligand>
        <name>substrate</name>
    </ligand>
</feature>
<feature type="binding site" evidence="1">
    <location>
        <position position="495"/>
    </location>
    <ligand>
        <name>ATP</name>
        <dbReference type="ChEBI" id="CHEBI:30616"/>
    </ligand>
</feature>
<feature type="binding site" evidence="1">
    <location>
        <position position="532"/>
    </location>
    <ligand>
        <name>ATP</name>
        <dbReference type="ChEBI" id="CHEBI:30616"/>
    </ligand>
</feature>
<feature type="binding site" evidence="1">
    <location>
        <position position="533"/>
    </location>
    <ligand>
        <name>Mg(2+)</name>
        <dbReference type="ChEBI" id="CHEBI:18420"/>
        <label>1</label>
    </ligand>
</feature>
<feature type="binding site" evidence="1">
    <location>
        <position position="535"/>
    </location>
    <ligand>
        <name>substrate</name>
    </ligand>
</feature>
<organism>
    <name type="scientific">Bartonella quintana (strain Toulouse)</name>
    <name type="common">Rochalimaea quintana</name>
    <dbReference type="NCBI Taxonomy" id="283165"/>
    <lineage>
        <taxon>Bacteria</taxon>
        <taxon>Pseudomonadati</taxon>
        <taxon>Pseudomonadota</taxon>
        <taxon>Alphaproteobacteria</taxon>
        <taxon>Hyphomicrobiales</taxon>
        <taxon>Bartonellaceae</taxon>
        <taxon>Bartonella</taxon>
    </lineage>
</organism>
<keyword id="KW-0067">ATP-binding</keyword>
<keyword id="KW-0963">Cytoplasm</keyword>
<keyword id="KW-0436">Ligase</keyword>
<keyword id="KW-0460">Magnesium</keyword>
<keyword id="KW-0479">Metal-binding</keyword>
<keyword id="KW-0547">Nucleotide-binding</keyword>
<keyword id="KW-0658">Purine biosynthesis</keyword>